<feature type="chain" id="PRO_0000169533" description="Uncharacterized protein YhfX">
    <location>
        <begin position="1"/>
        <end position="387"/>
    </location>
</feature>
<feature type="turn" evidence="1">
    <location>
        <begin position="3"/>
        <end position="5"/>
    </location>
</feature>
<feature type="helix" evidence="1">
    <location>
        <begin position="11"/>
        <end position="22"/>
    </location>
</feature>
<feature type="strand" evidence="1">
    <location>
        <begin position="28"/>
        <end position="34"/>
    </location>
</feature>
<feature type="helix" evidence="1">
    <location>
        <begin position="35"/>
        <end position="52"/>
    </location>
</feature>
<feature type="helix" evidence="1">
    <location>
        <begin position="67"/>
        <end position="74"/>
    </location>
</feature>
<feature type="turn" evidence="1">
    <location>
        <begin position="75"/>
        <end position="77"/>
    </location>
</feature>
<feature type="strand" evidence="1">
    <location>
        <begin position="81"/>
        <end position="85"/>
    </location>
</feature>
<feature type="helix" evidence="1">
    <location>
        <begin position="86"/>
        <end position="94"/>
    </location>
</feature>
<feature type="strand" evidence="1">
    <location>
        <begin position="99"/>
        <end position="106"/>
    </location>
</feature>
<feature type="helix" evidence="1">
    <location>
        <begin position="110"/>
        <end position="112"/>
    </location>
</feature>
<feature type="helix" evidence="1">
    <location>
        <begin position="113"/>
        <end position="119"/>
    </location>
</feature>
<feature type="strand" evidence="1">
    <location>
        <begin position="121"/>
        <end position="128"/>
    </location>
</feature>
<feature type="helix" evidence="1">
    <location>
        <begin position="129"/>
        <end position="141"/>
    </location>
</feature>
<feature type="strand" evidence="1">
    <location>
        <begin position="146"/>
        <end position="153"/>
    </location>
</feature>
<feature type="strand" evidence="1">
    <location>
        <begin position="166"/>
        <end position="168"/>
    </location>
</feature>
<feature type="helix" evidence="1">
    <location>
        <begin position="169"/>
        <end position="171"/>
    </location>
</feature>
<feature type="helix" evidence="1">
    <location>
        <begin position="172"/>
        <end position="181"/>
    </location>
</feature>
<feature type="strand" evidence="1">
    <location>
        <begin position="185"/>
        <end position="191"/>
    </location>
</feature>
<feature type="strand" evidence="1">
    <location>
        <begin position="195"/>
        <end position="199"/>
    </location>
</feature>
<feature type="turn" evidence="1">
    <location>
        <begin position="200"/>
        <end position="203"/>
    </location>
</feature>
<feature type="strand" evidence="1">
    <location>
        <begin position="204"/>
        <end position="207"/>
    </location>
</feature>
<feature type="helix" evidence="1">
    <location>
        <begin position="209"/>
        <end position="222"/>
    </location>
</feature>
<feature type="turn" evidence="1">
    <location>
        <begin position="223"/>
        <end position="225"/>
    </location>
</feature>
<feature type="strand" evidence="1">
    <location>
        <begin position="229"/>
        <end position="232"/>
    </location>
</feature>
<feature type="turn" evidence="1">
    <location>
        <begin position="239"/>
        <end position="241"/>
    </location>
</feature>
<feature type="helix" evidence="1">
    <location>
        <begin position="242"/>
        <end position="247"/>
    </location>
</feature>
<feature type="helix" evidence="1">
    <location>
        <begin position="257"/>
        <end position="260"/>
    </location>
</feature>
<feature type="helix" evidence="1">
    <location>
        <begin position="264"/>
        <end position="266"/>
    </location>
</feature>
<feature type="strand" evidence="1">
    <location>
        <begin position="271"/>
        <end position="273"/>
    </location>
</feature>
<feature type="strand" evidence="1">
    <location>
        <begin position="277"/>
        <end position="287"/>
    </location>
</feature>
<feature type="strand" evidence="1">
    <location>
        <begin position="290"/>
        <end position="294"/>
    </location>
</feature>
<feature type="strand" evidence="1">
    <location>
        <begin position="306"/>
        <end position="311"/>
    </location>
</feature>
<feature type="turn" evidence="1">
    <location>
        <begin position="312"/>
        <end position="315"/>
    </location>
</feature>
<feature type="strand" evidence="1">
    <location>
        <begin position="316"/>
        <end position="322"/>
    </location>
</feature>
<feature type="strand" evidence="1">
    <location>
        <begin position="332"/>
        <end position="338"/>
    </location>
</feature>
<feature type="strand" evidence="1">
    <location>
        <begin position="345"/>
        <end position="348"/>
    </location>
</feature>
<feature type="helix" evidence="1">
    <location>
        <begin position="354"/>
        <end position="356"/>
    </location>
</feature>
<feature type="strand" evidence="1">
    <location>
        <begin position="360"/>
        <end position="365"/>
    </location>
</feature>
<feature type="helix" evidence="1">
    <location>
        <begin position="367"/>
        <end position="369"/>
    </location>
</feature>
<feature type="strand" evidence="1">
    <location>
        <begin position="373"/>
        <end position="378"/>
    </location>
</feature>
<name>YHFX_ECOLI</name>
<sequence>MFVEALKRQNPALISAALSLWQQGKIAPDSWVIDVDQILENGKRLIETARLYGIELYLMTKQFGRNPWLAEKLLALGYSGIVAVDYKEARVMRRAGLPVAHQGHLVQIPCHQVADAVEQGTDVITVFTLDKAREVSAAAVKAGRIQSVLLKVYSDDDFLYPGQESGFALKVLPEIVAEIQNLPGLHLAGLTHFPCLLWDEAVGKVLPTPNLHTLIQARDQLAKSGIALEQLNAPSATSCTSLPLLAQYGVTHAEPGHALTGTIPANQQGDQPERIAMLWLSEISHHFRGDSYCYGGGYYRRGHAQHALVFTPENQKITETNLKTVDDSSIDYTLPLAGEFPVSSAVVLCFRTQIFVTRSDVVLVSGIHRGEPEIVGRYDSLGNSLGA</sequence>
<organism>
    <name type="scientific">Escherichia coli (strain K12)</name>
    <dbReference type="NCBI Taxonomy" id="83333"/>
    <lineage>
        <taxon>Bacteria</taxon>
        <taxon>Pseudomonadati</taxon>
        <taxon>Pseudomonadota</taxon>
        <taxon>Gammaproteobacteria</taxon>
        <taxon>Enterobacterales</taxon>
        <taxon>Enterobacteriaceae</taxon>
        <taxon>Escherichia</taxon>
    </lineage>
</organism>
<dbReference type="EMBL" id="U18997">
    <property type="protein sequence ID" value="AAA58178.1"/>
    <property type="molecule type" value="Genomic_DNA"/>
</dbReference>
<dbReference type="EMBL" id="U00096">
    <property type="protein sequence ID" value="AAC76406.1"/>
    <property type="molecule type" value="Genomic_DNA"/>
</dbReference>
<dbReference type="EMBL" id="AP009048">
    <property type="protein sequence ID" value="BAE77910.1"/>
    <property type="molecule type" value="Genomic_DNA"/>
</dbReference>
<dbReference type="PIR" id="H65132">
    <property type="entry name" value="H65132"/>
</dbReference>
<dbReference type="RefSeq" id="NP_417840.1">
    <property type="nucleotide sequence ID" value="NC_000913.3"/>
</dbReference>
<dbReference type="RefSeq" id="WP_000497334.1">
    <property type="nucleotide sequence ID" value="NZ_SSZK01000008.1"/>
</dbReference>
<dbReference type="PDB" id="4KBX">
    <property type="method" value="X-ray"/>
    <property type="resolution" value="1.60 A"/>
    <property type="chains" value="A=2-387"/>
</dbReference>
<dbReference type="PDBsum" id="4KBX"/>
<dbReference type="SMR" id="P45550"/>
<dbReference type="BioGRID" id="4262089">
    <property type="interactions" value="124"/>
</dbReference>
<dbReference type="FunCoup" id="P45550">
    <property type="interactions" value="98"/>
</dbReference>
<dbReference type="IntAct" id="P45550">
    <property type="interactions" value="2"/>
</dbReference>
<dbReference type="STRING" id="511145.b3381"/>
<dbReference type="PaxDb" id="511145-b3381"/>
<dbReference type="DNASU" id="947889"/>
<dbReference type="EnsemblBacteria" id="AAC76406">
    <property type="protein sequence ID" value="AAC76406"/>
    <property type="gene ID" value="b3381"/>
</dbReference>
<dbReference type="GeneID" id="947889"/>
<dbReference type="KEGG" id="ecj:JW3344"/>
<dbReference type="KEGG" id="eco:b3381"/>
<dbReference type="KEGG" id="ecoc:C3026_18350"/>
<dbReference type="PATRIC" id="fig|1411691.4.peg.3349"/>
<dbReference type="EchoBASE" id="EB2755"/>
<dbReference type="eggNOG" id="COG3457">
    <property type="taxonomic scope" value="Bacteria"/>
</dbReference>
<dbReference type="HOGENOM" id="CLU_060710_0_0_6"/>
<dbReference type="InParanoid" id="P45550"/>
<dbReference type="OMA" id="AFRTQIF"/>
<dbReference type="OrthoDB" id="3189402at2"/>
<dbReference type="BioCyc" id="EcoCyc:G7733-MONOMER"/>
<dbReference type="EvolutionaryTrace" id="P45550"/>
<dbReference type="PRO" id="PR:P45550"/>
<dbReference type="Proteomes" id="UP000000625">
    <property type="component" value="Chromosome"/>
</dbReference>
<dbReference type="CDD" id="cd06811">
    <property type="entry name" value="PLPDE_III_yhfX_like"/>
    <property type="match status" value="1"/>
</dbReference>
<dbReference type="Gene3D" id="2.40.37.30">
    <property type="match status" value="2"/>
</dbReference>
<dbReference type="InterPro" id="IPR001608">
    <property type="entry name" value="Ala_racemase_N"/>
</dbReference>
<dbReference type="InterPro" id="IPR029066">
    <property type="entry name" value="PLP-binding_barrel"/>
</dbReference>
<dbReference type="InterPro" id="IPR048449">
    <property type="entry name" value="YhfX-like_C"/>
</dbReference>
<dbReference type="Pfam" id="PF01168">
    <property type="entry name" value="Ala_racemase_N"/>
    <property type="match status" value="1"/>
</dbReference>
<dbReference type="Pfam" id="PF21279">
    <property type="entry name" value="YhfX-like_C"/>
    <property type="match status" value="1"/>
</dbReference>
<dbReference type="SUPFAM" id="SSF51419">
    <property type="entry name" value="PLP-binding barrel"/>
    <property type="match status" value="1"/>
</dbReference>
<gene>
    <name type="primary">yhfX</name>
    <name type="ordered locus">b3381</name>
    <name type="ordered locus">JW3344</name>
</gene>
<evidence type="ECO:0007829" key="1">
    <source>
        <dbReference type="PDB" id="4KBX"/>
    </source>
</evidence>
<proteinExistence type="evidence at protein level"/>
<protein>
    <recommendedName>
        <fullName>Uncharacterized protein YhfX</fullName>
    </recommendedName>
</protein>
<keyword id="KW-0002">3D-structure</keyword>
<keyword id="KW-1185">Reference proteome</keyword>
<reference key="1">
    <citation type="journal article" date="1997" name="Science">
        <title>The complete genome sequence of Escherichia coli K-12.</title>
        <authorList>
            <person name="Blattner F.R."/>
            <person name="Plunkett G. III"/>
            <person name="Bloch C.A."/>
            <person name="Perna N.T."/>
            <person name="Burland V."/>
            <person name="Riley M."/>
            <person name="Collado-Vides J."/>
            <person name="Glasner J.D."/>
            <person name="Rode C.K."/>
            <person name="Mayhew G.F."/>
            <person name="Gregor J."/>
            <person name="Davis N.W."/>
            <person name="Kirkpatrick H.A."/>
            <person name="Goeden M.A."/>
            <person name="Rose D.J."/>
            <person name="Mau B."/>
            <person name="Shao Y."/>
        </authorList>
    </citation>
    <scope>NUCLEOTIDE SEQUENCE [LARGE SCALE GENOMIC DNA]</scope>
    <source>
        <strain>K12 / MG1655 / ATCC 47076</strain>
    </source>
</reference>
<reference key="2">
    <citation type="journal article" date="2006" name="Mol. Syst. Biol.">
        <title>Highly accurate genome sequences of Escherichia coli K-12 strains MG1655 and W3110.</title>
        <authorList>
            <person name="Hayashi K."/>
            <person name="Morooka N."/>
            <person name="Yamamoto Y."/>
            <person name="Fujita K."/>
            <person name="Isono K."/>
            <person name="Choi S."/>
            <person name="Ohtsubo E."/>
            <person name="Baba T."/>
            <person name="Wanner B.L."/>
            <person name="Mori H."/>
            <person name="Horiuchi T."/>
        </authorList>
    </citation>
    <scope>NUCLEOTIDE SEQUENCE [LARGE SCALE GENOMIC DNA]</scope>
    <source>
        <strain>K12 / W3110 / ATCC 27325 / DSM 5911</strain>
    </source>
</reference>
<accession>P45550</accession>
<accession>Q2M746</accession>